<protein>
    <recommendedName>
        <fullName evidence="1">Urease accessory protein UreF</fullName>
    </recommendedName>
</protein>
<comment type="function">
    <text evidence="1">Required for maturation of urease via the functional incorporation of the urease nickel metallocenter.</text>
</comment>
<comment type="subunit">
    <text evidence="1">UreD, UreF and UreG form a complex that acts as a GTP-hydrolysis-dependent molecular chaperone, activating the urease apoprotein by helping to assemble the nickel containing metallocenter of UreC. The UreE protein probably delivers the nickel.</text>
</comment>
<comment type="subcellular location">
    <subcellularLocation>
        <location evidence="1">Cytoplasm</location>
    </subcellularLocation>
</comment>
<comment type="similarity">
    <text evidence="1">Belongs to the UreF family.</text>
</comment>
<accession>Q98CZ3</accession>
<organism>
    <name type="scientific">Mesorhizobium japonicum (strain LMG 29417 / CECT 9101 / MAFF 303099)</name>
    <name type="common">Mesorhizobium loti (strain MAFF 303099)</name>
    <dbReference type="NCBI Taxonomy" id="266835"/>
    <lineage>
        <taxon>Bacteria</taxon>
        <taxon>Pseudomonadati</taxon>
        <taxon>Pseudomonadota</taxon>
        <taxon>Alphaproteobacteria</taxon>
        <taxon>Hyphomicrobiales</taxon>
        <taxon>Phyllobacteriaceae</taxon>
        <taxon>Mesorhizobium</taxon>
    </lineage>
</organism>
<feature type="chain" id="PRO_0000344166" description="Urease accessory protein UreF">
    <location>
        <begin position="1"/>
        <end position="223"/>
    </location>
</feature>
<keyword id="KW-0143">Chaperone</keyword>
<keyword id="KW-0963">Cytoplasm</keyword>
<keyword id="KW-0996">Nickel insertion</keyword>
<name>UREF_RHILO</name>
<dbReference type="EMBL" id="BA000012">
    <property type="protein sequence ID" value="BAB51478.1"/>
    <property type="molecule type" value="Genomic_DNA"/>
</dbReference>
<dbReference type="RefSeq" id="WP_010912819.1">
    <property type="nucleotide sequence ID" value="NC_002678.2"/>
</dbReference>
<dbReference type="SMR" id="Q98CZ3"/>
<dbReference type="KEGG" id="mlo:mll4936"/>
<dbReference type="PATRIC" id="fig|266835.9.peg.3898"/>
<dbReference type="eggNOG" id="COG0830">
    <property type="taxonomic scope" value="Bacteria"/>
</dbReference>
<dbReference type="HOGENOM" id="CLU_049215_2_0_5"/>
<dbReference type="Proteomes" id="UP000000552">
    <property type="component" value="Chromosome"/>
</dbReference>
<dbReference type="GO" id="GO:0005737">
    <property type="term" value="C:cytoplasm"/>
    <property type="evidence" value="ECO:0007669"/>
    <property type="project" value="UniProtKB-SubCell"/>
</dbReference>
<dbReference type="GO" id="GO:0016151">
    <property type="term" value="F:nickel cation binding"/>
    <property type="evidence" value="ECO:0007669"/>
    <property type="project" value="UniProtKB-UniRule"/>
</dbReference>
<dbReference type="Gene3D" id="1.10.4190.10">
    <property type="entry name" value="Urease accessory protein UreF"/>
    <property type="match status" value="1"/>
</dbReference>
<dbReference type="HAMAP" id="MF_01385">
    <property type="entry name" value="UreF"/>
    <property type="match status" value="1"/>
</dbReference>
<dbReference type="InterPro" id="IPR002639">
    <property type="entry name" value="UreF"/>
</dbReference>
<dbReference type="InterPro" id="IPR038277">
    <property type="entry name" value="UreF_sf"/>
</dbReference>
<dbReference type="PANTHER" id="PTHR33620">
    <property type="entry name" value="UREASE ACCESSORY PROTEIN F"/>
    <property type="match status" value="1"/>
</dbReference>
<dbReference type="PANTHER" id="PTHR33620:SF1">
    <property type="entry name" value="UREASE ACCESSORY PROTEIN F"/>
    <property type="match status" value="1"/>
</dbReference>
<dbReference type="Pfam" id="PF01730">
    <property type="entry name" value="UreF"/>
    <property type="match status" value="1"/>
</dbReference>
<dbReference type="PIRSF" id="PIRSF009467">
    <property type="entry name" value="Ureas_acces_UreF"/>
    <property type="match status" value="1"/>
</dbReference>
<evidence type="ECO:0000255" key="1">
    <source>
        <dbReference type="HAMAP-Rule" id="MF_01385"/>
    </source>
</evidence>
<gene>
    <name evidence="1" type="primary">ureF</name>
    <name type="ordered locus">mll4936</name>
</gene>
<sequence>MTDQPSSIALLRLMAWLSPAFPVGGFAYSHGLECAVHDGLVADATSLANWLETLVKMGSGWNDAVLFCESWRRARNAGDLDEVAALAEALAGSRERHAETMLQGAAFLKAAAAWPNPVLARLPAECAYCVTVGAIAGGNGIALQDALSAFLQAFFSNLVQAAIRLGVVGQSEATTLLAGFEPLALSTADRASRSTLDDLGGCAFVSDVVAMKHETQYSRLFRS</sequence>
<reference key="1">
    <citation type="journal article" date="2000" name="DNA Res.">
        <title>Complete genome structure of the nitrogen-fixing symbiotic bacterium Mesorhizobium loti.</title>
        <authorList>
            <person name="Kaneko T."/>
            <person name="Nakamura Y."/>
            <person name="Sato S."/>
            <person name="Asamizu E."/>
            <person name="Kato T."/>
            <person name="Sasamoto S."/>
            <person name="Watanabe A."/>
            <person name="Idesawa K."/>
            <person name="Ishikawa A."/>
            <person name="Kawashima K."/>
            <person name="Kimura T."/>
            <person name="Kishida Y."/>
            <person name="Kiyokawa C."/>
            <person name="Kohara M."/>
            <person name="Matsumoto M."/>
            <person name="Matsuno A."/>
            <person name="Mochizuki Y."/>
            <person name="Nakayama S."/>
            <person name="Nakazaki N."/>
            <person name="Shimpo S."/>
            <person name="Sugimoto M."/>
            <person name="Takeuchi C."/>
            <person name="Yamada M."/>
            <person name="Tabata S."/>
        </authorList>
    </citation>
    <scope>NUCLEOTIDE SEQUENCE [LARGE SCALE GENOMIC DNA]</scope>
    <source>
        <strain>LMG 29417 / CECT 9101 / MAFF 303099</strain>
    </source>
</reference>
<proteinExistence type="inferred from homology"/>